<organism>
    <name type="scientific">Rattus norvegicus</name>
    <name type="common">Rat</name>
    <dbReference type="NCBI Taxonomy" id="10116"/>
    <lineage>
        <taxon>Eukaryota</taxon>
        <taxon>Metazoa</taxon>
        <taxon>Chordata</taxon>
        <taxon>Craniata</taxon>
        <taxon>Vertebrata</taxon>
        <taxon>Euteleostomi</taxon>
        <taxon>Mammalia</taxon>
        <taxon>Eutheria</taxon>
        <taxon>Euarchontoglires</taxon>
        <taxon>Glires</taxon>
        <taxon>Rodentia</taxon>
        <taxon>Myomorpha</taxon>
        <taxon>Muroidea</taxon>
        <taxon>Muridae</taxon>
        <taxon>Murinae</taxon>
        <taxon>Rattus</taxon>
    </lineage>
</organism>
<sequence>MISPSSRKGMLKERAMDLVTQTTILPLLFGCLGIFSLFRLLQRTRSKAYLRNAVVVVTGATSGLGKECARVFHAAGAKVVLCGRNVKALEEFTRELADSSSSQGQTHQPCVVTFDLADPGAIAPAAAEILQCFGYVDILINNAGISYRGAISDTIVDVDRKVMEINYFGPVALTKALLPSMVERKRGHIVAISSIQGKISIPFRSAYAASKHATQAFFDCLRAEMKDSDIEVTVISPGYIHTNLSVNAVTADGSRYGALDKNTAQGRSAVEVAQDIFDAVGKKKKDVLLTDFLPTMAVYIRTLAPRLFFRIMASRARKERKSKNS</sequence>
<keyword id="KW-0025">Alternative splicing</keyword>
<keyword id="KW-0256">Endoplasmic reticulum</keyword>
<keyword id="KW-0472">Membrane</keyword>
<keyword id="KW-0520">NAD</keyword>
<keyword id="KW-0521">NADP</keyword>
<keyword id="KW-0560">Oxidoreductase</keyword>
<keyword id="KW-1185">Reference proteome</keyword>
<keyword id="KW-0735">Signal-anchor</keyword>
<keyword id="KW-0812">Transmembrane</keyword>
<keyword id="KW-1133">Transmembrane helix</keyword>
<reference key="1">
    <citation type="journal article" date="2007" name="J. Biol. Chem.">
        <title>Rat liver peroxisomes after fibrate treatment: a survey using quantitative mass spectrometry.</title>
        <authorList>
            <person name="Islinger M."/>
            <person name="Lueers G.H."/>
            <person name="Li K.W."/>
            <person name="Loos M."/>
            <person name="Voelkl A."/>
        </authorList>
    </citation>
    <scope>NUCLEOTIDE SEQUENCE [MRNA] (ISOFORM 2)</scope>
    <scope>SUBCELLULAR LOCATION</scope>
    <scope>IDENTIFICATION BY MASS SPECTROMETRY</scope>
    <source>
        <strain>Sprague-Dawley</strain>
        <tissue>Liver</tissue>
    </source>
</reference>
<reference key="2">
    <citation type="journal article" date="2004" name="Genome Res.">
        <title>The status, quality, and expansion of the NIH full-length cDNA project: the Mammalian Gene Collection (MGC).</title>
        <authorList>
            <consortium name="The MGC Project Team"/>
        </authorList>
    </citation>
    <scope>NUCLEOTIDE SEQUENCE [LARGE SCALE MRNA] (ISOFORM 1)</scope>
    <source>
        <tissue>Ovary</tissue>
    </source>
</reference>
<reference key="3">
    <citation type="journal article" date="2009" name="Mol. Cell. Endocrinol.">
        <title>Comparison of predicted and experimental subcellular localization of two putative rat steroid dehydrogenases from the short-chain dehydrogenase/reductase protein superfamily.</title>
        <authorList>
            <person name="Keller B."/>
            <person name="Meier M."/>
            <person name="Adamski J."/>
        </authorList>
    </citation>
    <scope>SUBCELLULAR LOCATION</scope>
</reference>
<evidence type="ECO:0000250" key="1">
    <source>
        <dbReference type="UniProtKB" id="Q6IAN0"/>
    </source>
</evidence>
<evidence type="ECO:0000250" key="2">
    <source>
        <dbReference type="UniProtKB" id="Q99714"/>
    </source>
</evidence>
<evidence type="ECO:0000255" key="3"/>
<evidence type="ECO:0000255" key="4">
    <source>
        <dbReference type="PROSITE-ProRule" id="PRU10001"/>
    </source>
</evidence>
<evidence type="ECO:0000269" key="5">
    <source>
    </source>
</evidence>
<evidence type="ECO:0000269" key="6">
    <source>
    </source>
</evidence>
<evidence type="ECO:0000303" key="7">
    <source>
    </source>
</evidence>
<evidence type="ECO:0000305" key="8"/>
<feature type="chain" id="PRO_0000312108" description="Dehydrogenase/reductase SDR family member 7B">
    <location>
        <begin position="1"/>
        <end position="325"/>
    </location>
</feature>
<feature type="topological domain" description="Cytoplasmic" evidence="3">
    <location>
        <begin position="1"/>
        <end position="17"/>
    </location>
</feature>
<feature type="transmembrane region" description="Helical; Signal-anchor for type II membrane protein" evidence="3">
    <location>
        <begin position="18"/>
        <end position="38"/>
    </location>
</feature>
<feature type="topological domain" description="Lumenal" evidence="3">
    <location>
        <begin position="39"/>
        <end position="325"/>
    </location>
</feature>
<feature type="active site" description="Proton acceptor" evidence="4">
    <location>
        <position position="207"/>
    </location>
</feature>
<feature type="binding site" evidence="2">
    <location>
        <position position="62"/>
    </location>
    <ligand>
        <name>NAD(+)</name>
        <dbReference type="ChEBI" id="CHEBI:57540"/>
    </ligand>
</feature>
<feature type="binding site" evidence="2">
    <location>
        <position position="64"/>
    </location>
    <ligand>
        <name>NAD(+)</name>
        <dbReference type="ChEBI" id="CHEBI:57540"/>
    </ligand>
</feature>
<feature type="binding site" evidence="2">
    <location>
        <position position="194"/>
    </location>
    <ligand>
        <name>substrate</name>
    </ligand>
</feature>
<feature type="binding site" evidence="2">
    <location>
        <position position="207"/>
    </location>
    <ligand>
        <name>NAD(+)</name>
        <dbReference type="ChEBI" id="CHEBI:57540"/>
    </ligand>
</feature>
<feature type="binding site" evidence="2">
    <location>
        <position position="211"/>
    </location>
    <ligand>
        <name>NAD(+)</name>
        <dbReference type="ChEBI" id="CHEBI:57540"/>
    </ligand>
</feature>
<feature type="binding site" evidence="2">
    <location>
        <position position="242"/>
    </location>
    <ligand>
        <name>NAD(+)</name>
        <dbReference type="ChEBI" id="CHEBI:57540"/>
    </ligand>
</feature>
<feature type="splice variant" id="VSP_029700" description="In isoform 2." evidence="7">
    <location>
        <begin position="1"/>
        <end position="9"/>
    </location>
</feature>
<comment type="function">
    <text evidence="8">Putative oxidoreductase.</text>
</comment>
<comment type="subcellular location">
    <subcellularLocation>
        <location evidence="5 6">Endoplasmic reticulum membrane</location>
        <topology evidence="5 6">Single-pass type II membrane protein</topology>
    </subcellularLocation>
</comment>
<comment type="alternative products">
    <event type="alternative splicing"/>
    <isoform>
        <id>Q5RJY4-1</id>
        <name>1</name>
        <name>Dhrs7b.1</name>
        <sequence type="displayed"/>
    </isoform>
    <isoform>
        <id>Q5RJY4-2</id>
        <name>2</name>
        <name>Dhrs7b.2</name>
        <sequence type="described" ref="VSP_029700"/>
    </isoform>
</comment>
<comment type="similarity">
    <text evidence="8">Belongs to the short-chain dehydrogenases/reductases (SDR) family.</text>
</comment>
<accession>Q5RJY4</accession>
<accession>A4GWE3</accession>
<name>DRS7B_RAT</name>
<dbReference type="EC" id="1.1.-.-" evidence="8"/>
<dbReference type="EMBL" id="EF445633">
    <property type="protein sequence ID" value="ABO31120.1"/>
    <property type="molecule type" value="mRNA"/>
</dbReference>
<dbReference type="EMBL" id="BC086453">
    <property type="protein sequence ID" value="AAH86453.1"/>
    <property type="molecule type" value="mRNA"/>
</dbReference>
<dbReference type="RefSeq" id="NP_001008507.1">
    <molecule id="Q5RJY4-1"/>
    <property type="nucleotide sequence ID" value="NM_001008507.1"/>
</dbReference>
<dbReference type="RefSeq" id="XP_006246534.1">
    <molecule id="Q5RJY4-2"/>
    <property type="nucleotide sequence ID" value="XM_006246472.5"/>
</dbReference>
<dbReference type="RefSeq" id="XP_006246535.1">
    <molecule id="Q5RJY4-2"/>
    <property type="nucleotide sequence ID" value="XM_006246473.5"/>
</dbReference>
<dbReference type="RefSeq" id="XP_006246536.1">
    <property type="nucleotide sequence ID" value="XM_006246474.3"/>
</dbReference>
<dbReference type="RefSeq" id="XP_038941333.1">
    <molecule id="Q5RJY4-2"/>
    <property type="nucleotide sequence ID" value="XM_039085405.2"/>
</dbReference>
<dbReference type="RefSeq" id="XP_038941334.1">
    <molecule id="Q5RJY4-2"/>
    <property type="nucleotide sequence ID" value="XM_039085406.2"/>
</dbReference>
<dbReference type="RefSeq" id="XP_063124693.1">
    <molecule id="Q5RJY4-2"/>
    <property type="nucleotide sequence ID" value="XM_063268623.1"/>
</dbReference>
<dbReference type="SMR" id="Q5RJY4"/>
<dbReference type="BioGRID" id="252129">
    <property type="interactions" value="1"/>
</dbReference>
<dbReference type="FunCoup" id="Q5RJY4">
    <property type="interactions" value="432"/>
</dbReference>
<dbReference type="IntAct" id="Q5RJY4">
    <property type="interactions" value="3"/>
</dbReference>
<dbReference type="MINT" id="Q5RJY4"/>
<dbReference type="STRING" id="10116.ENSRNOP00000063346"/>
<dbReference type="PhosphoSitePlus" id="Q5RJY4"/>
<dbReference type="jPOST" id="Q5RJY4"/>
<dbReference type="PaxDb" id="10116-ENSRNOP00000063744"/>
<dbReference type="Ensembl" id="ENSRNOT00000066250.4">
    <molecule id="Q5RJY4-1"/>
    <property type="protein sequence ID" value="ENSRNOP00000063346.3"/>
    <property type="gene ID" value="ENSRNOG00000005360.9"/>
</dbReference>
<dbReference type="GeneID" id="287380"/>
<dbReference type="KEGG" id="rno:287380"/>
<dbReference type="UCSC" id="RGD:1311243">
    <molecule id="Q5RJY4-1"/>
    <property type="organism name" value="rat"/>
</dbReference>
<dbReference type="AGR" id="RGD:1311243"/>
<dbReference type="CTD" id="25979"/>
<dbReference type="RGD" id="1311243">
    <property type="gene designation" value="Dhrs7b"/>
</dbReference>
<dbReference type="eggNOG" id="KOG1205">
    <property type="taxonomic scope" value="Eukaryota"/>
</dbReference>
<dbReference type="GeneTree" id="ENSGT00940000158171"/>
<dbReference type="InParanoid" id="Q5RJY4"/>
<dbReference type="OrthoDB" id="52499at9989"/>
<dbReference type="PhylomeDB" id="Q5RJY4"/>
<dbReference type="TreeFam" id="TF313474"/>
<dbReference type="Reactome" id="R-RNO-75896">
    <property type="pathway name" value="Plasmalogen biosynthesis"/>
</dbReference>
<dbReference type="PRO" id="PR:Q5RJY4"/>
<dbReference type="Proteomes" id="UP000002494">
    <property type="component" value="Chromosome 10"/>
</dbReference>
<dbReference type="Bgee" id="ENSRNOG00000005360">
    <property type="expression patterns" value="Expressed in pancreas and 20 other cell types or tissues"/>
</dbReference>
<dbReference type="GO" id="GO:0005789">
    <property type="term" value="C:endoplasmic reticulum membrane"/>
    <property type="evidence" value="ECO:0007669"/>
    <property type="project" value="UniProtKB-SubCell"/>
</dbReference>
<dbReference type="GO" id="GO:0016020">
    <property type="term" value="C:membrane"/>
    <property type="evidence" value="ECO:0000266"/>
    <property type="project" value="RGD"/>
</dbReference>
<dbReference type="GO" id="GO:0005634">
    <property type="term" value="C:nucleus"/>
    <property type="evidence" value="ECO:0000266"/>
    <property type="project" value="RGD"/>
</dbReference>
<dbReference type="GO" id="GO:0005777">
    <property type="term" value="C:peroxisome"/>
    <property type="evidence" value="ECO:0000266"/>
    <property type="project" value="RGD"/>
</dbReference>
<dbReference type="GO" id="GO:0005667">
    <property type="term" value="C:transcription regulator complex"/>
    <property type="evidence" value="ECO:0000266"/>
    <property type="project" value="RGD"/>
</dbReference>
<dbReference type="GO" id="GO:0140297">
    <property type="term" value="F:DNA-binding transcription factor binding"/>
    <property type="evidence" value="ECO:0000266"/>
    <property type="project" value="RGD"/>
</dbReference>
<dbReference type="GO" id="GO:0016491">
    <property type="term" value="F:oxidoreductase activity"/>
    <property type="evidence" value="ECO:0007669"/>
    <property type="project" value="UniProtKB-KW"/>
</dbReference>
<dbReference type="GO" id="GO:0003714">
    <property type="term" value="F:transcription corepressor activity"/>
    <property type="evidence" value="ECO:0000266"/>
    <property type="project" value="RGD"/>
</dbReference>
<dbReference type="GO" id="GO:0060612">
    <property type="term" value="P:adipose tissue development"/>
    <property type="evidence" value="ECO:0000266"/>
    <property type="project" value="RGD"/>
</dbReference>
<dbReference type="GO" id="GO:0050873">
    <property type="term" value="P:brown fat cell differentiation"/>
    <property type="evidence" value="ECO:0000266"/>
    <property type="project" value="RGD"/>
</dbReference>
<dbReference type="GO" id="GO:0008611">
    <property type="term" value="P:ether lipid biosynthetic process"/>
    <property type="evidence" value="ECO:0000266"/>
    <property type="project" value="RGD"/>
</dbReference>
<dbReference type="GO" id="GO:0006954">
    <property type="term" value="P:inflammatory response"/>
    <property type="evidence" value="ECO:0000266"/>
    <property type="project" value="RGD"/>
</dbReference>
<dbReference type="GO" id="GO:0030223">
    <property type="term" value="P:neutrophil differentiation"/>
    <property type="evidence" value="ECO:0000266"/>
    <property type="project" value="RGD"/>
</dbReference>
<dbReference type="GO" id="GO:0006656">
    <property type="term" value="P:phosphatidylcholine biosynthetic process"/>
    <property type="evidence" value="ECO:0000266"/>
    <property type="project" value="RGD"/>
</dbReference>
<dbReference type="GO" id="GO:0120161">
    <property type="term" value="P:regulation of cold-induced thermogenesis"/>
    <property type="evidence" value="ECO:0000266"/>
    <property type="project" value="RGD"/>
</dbReference>
<dbReference type="GO" id="GO:0006355">
    <property type="term" value="P:regulation of DNA-templated transcription"/>
    <property type="evidence" value="ECO:0000266"/>
    <property type="project" value="RGD"/>
</dbReference>
<dbReference type="GO" id="GO:0010468">
    <property type="term" value="P:regulation of gene expression"/>
    <property type="evidence" value="ECO:0000266"/>
    <property type="project" value="RGD"/>
</dbReference>
<dbReference type="CDD" id="cd05332">
    <property type="entry name" value="11beta-HSD1_like_SDR_c"/>
    <property type="match status" value="1"/>
</dbReference>
<dbReference type="FunFam" id="3.40.50.720:FF:000122">
    <property type="entry name" value="Dehydrogenase/reductase SDR family member 7B"/>
    <property type="match status" value="1"/>
</dbReference>
<dbReference type="Gene3D" id="3.40.50.720">
    <property type="entry name" value="NAD(P)-binding Rossmann-like Domain"/>
    <property type="match status" value="1"/>
</dbReference>
<dbReference type="InterPro" id="IPR036291">
    <property type="entry name" value="NAD(P)-bd_dom_sf"/>
</dbReference>
<dbReference type="InterPro" id="IPR020904">
    <property type="entry name" value="Sc_DH/Rdtase_CS"/>
</dbReference>
<dbReference type="InterPro" id="IPR002347">
    <property type="entry name" value="SDR_fam"/>
</dbReference>
<dbReference type="NCBIfam" id="NF004825">
    <property type="entry name" value="PRK06181.1"/>
    <property type="match status" value="1"/>
</dbReference>
<dbReference type="PANTHER" id="PTHR44196">
    <property type="entry name" value="DEHYDROGENASE/REDUCTASE SDR FAMILY MEMBER 7B"/>
    <property type="match status" value="1"/>
</dbReference>
<dbReference type="PANTHER" id="PTHR44196:SF1">
    <property type="entry name" value="DEHYDROGENASE_REDUCTASE SDR FAMILY MEMBER 7B"/>
    <property type="match status" value="1"/>
</dbReference>
<dbReference type="Pfam" id="PF00106">
    <property type="entry name" value="adh_short"/>
    <property type="match status" value="1"/>
</dbReference>
<dbReference type="PIRSF" id="PIRSF000126">
    <property type="entry name" value="11-beta-HSD1"/>
    <property type="match status" value="1"/>
</dbReference>
<dbReference type="PRINTS" id="PR00081">
    <property type="entry name" value="GDHRDH"/>
</dbReference>
<dbReference type="PRINTS" id="PR00080">
    <property type="entry name" value="SDRFAMILY"/>
</dbReference>
<dbReference type="SUPFAM" id="SSF51735">
    <property type="entry name" value="NAD(P)-binding Rossmann-fold domains"/>
    <property type="match status" value="1"/>
</dbReference>
<dbReference type="PROSITE" id="PS00061">
    <property type="entry name" value="ADH_SHORT"/>
    <property type="match status" value="1"/>
</dbReference>
<proteinExistence type="evidence at protein level"/>
<gene>
    <name type="primary">Dhrs7b</name>
    <name evidence="1" type="synonym">Sdr32c1</name>
</gene>
<protein>
    <recommendedName>
        <fullName evidence="1">Dehydrogenase/reductase SDR family member 7B</fullName>
        <ecNumber evidence="8">1.1.-.-</ecNumber>
    </recommendedName>
    <alternativeName>
        <fullName evidence="1">Short-chain dehydrogenase/reductase family 32C member 1</fullName>
        <shortName evidence="1">Protein SDR32C1</shortName>
    </alternativeName>
</protein>